<gene>
    <name type="primary">rps3</name>
</gene>
<comment type="subunit">
    <text evidence="1">Part of the 30S ribosomal subunit.</text>
</comment>
<comment type="subcellular location">
    <subcellularLocation>
        <location>Plastid</location>
        <location>Chloroplast</location>
    </subcellularLocation>
</comment>
<comment type="RNA editing">
    <location>
        <position position="16" evidence="2"/>
    </location>
    <location>
        <position position="22" evidence="2"/>
    </location>
    <location>
        <position position="211" evidence="2"/>
    </location>
    <text>The nonsense codon at position 16 is edited to a sense codon.</text>
</comment>
<comment type="similarity">
    <text evidence="3">Belongs to the universal ribosomal protein uS3 family.</text>
</comment>
<dbReference type="EMBL" id="AY178864">
    <property type="protein sequence ID" value="AAP29429.2"/>
    <property type="molecule type" value="Genomic_DNA"/>
</dbReference>
<dbReference type="RefSeq" id="NP_848098.2">
    <property type="nucleotide sequence ID" value="NC_004766.1"/>
</dbReference>
<dbReference type="SMR" id="Q85FI4"/>
<dbReference type="GeneID" id="807357"/>
<dbReference type="GO" id="GO:0009507">
    <property type="term" value="C:chloroplast"/>
    <property type="evidence" value="ECO:0007669"/>
    <property type="project" value="UniProtKB-SubCell"/>
</dbReference>
<dbReference type="GO" id="GO:0022627">
    <property type="term" value="C:cytosolic small ribosomal subunit"/>
    <property type="evidence" value="ECO:0007669"/>
    <property type="project" value="TreeGrafter"/>
</dbReference>
<dbReference type="GO" id="GO:0019843">
    <property type="term" value="F:rRNA binding"/>
    <property type="evidence" value="ECO:0007669"/>
    <property type="project" value="UniProtKB-UniRule"/>
</dbReference>
<dbReference type="GO" id="GO:0003735">
    <property type="term" value="F:structural constituent of ribosome"/>
    <property type="evidence" value="ECO:0007669"/>
    <property type="project" value="InterPro"/>
</dbReference>
<dbReference type="GO" id="GO:0006412">
    <property type="term" value="P:translation"/>
    <property type="evidence" value="ECO:0007669"/>
    <property type="project" value="UniProtKB-UniRule"/>
</dbReference>
<dbReference type="CDD" id="cd02412">
    <property type="entry name" value="KH-II_30S_S3"/>
    <property type="match status" value="1"/>
</dbReference>
<dbReference type="Gene3D" id="3.30.300.20">
    <property type="match status" value="1"/>
</dbReference>
<dbReference type="Gene3D" id="3.30.1140.32">
    <property type="entry name" value="Ribosomal protein S3, C-terminal domain"/>
    <property type="match status" value="1"/>
</dbReference>
<dbReference type="HAMAP" id="MF_01309_B">
    <property type="entry name" value="Ribosomal_uS3_B"/>
    <property type="match status" value="1"/>
</dbReference>
<dbReference type="InterPro" id="IPR015946">
    <property type="entry name" value="KH_dom-like_a/b"/>
</dbReference>
<dbReference type="InterPro" id="IPR004044">
    <property type="entry name" value="KH_dom_type_2"/>
</dbReference>
<dbReference type="InterPro" id="IPR009019">
    <property type="entry name" value="KH_sf_prok-type"/>
</dbReference>
<dbReference type="InterPro" id="IPR036419">
    <property type="entry name" value="Ribosomal_S3_C_sf"/>
</dbReference>
<dbReference type="InterPro" id="IPR005704">
    <property type="entry name" value="Ribosomal_uS3_bac-typ"/>
</dbReference>
<dbReference type="InterPro" id="IPR001351">
    <property type="entry name" value="Ribosomal_uS3_C"/>
</dbReference>
<dbReference type="NCBIfam" id="TIGR01009">
    <property type="entry name" value="rpsC_bact"/>
    <property type="match status" value="1"/>
</dbReference>
<dbReference type="PANTHER" id="PTHR11760">
    <property type="entry name" value="30S/40S RIBOSOMAL PROTEIN S3"/>
    <property type="match status" value="1"/>
</dbReference>
<dbReference type="PANTHER" id="PTHR11760:SF19">
    <property type="entry name" value="SMALL RIBOSOMAL SUBUNIT PROTEIN US3C"/>
    <property type="match status" value="1"/>
</dbReference>
<dbReference type="Pfam" id="PF00189">
    <property type="entry name" value="Ribosomal_S3_C"/>
    <property type="match status" value="1"/>
</dbReference>
<dbReference type="SUPFAM" id="SSF54814">
    <property type="entry name" value="Prokaryotic type KH domain (KH-domain type II)"/>
    <property type="match status" value="1"/>
</dbReference>
<dbReference type="SUPFAM" id="SSF54821">
    <property type="entry name" value="Ribosomal protein S3 C-terminal domain"/>
    <property type="match status" value="1"/>
</dbReference>
<dbReference type="PROSITE" id="PS50823">
    <property type="entry name" value="KH_TYPE_2"/>
    <property type="match status" value="1"/>
</dbReference>
<accession>Q85FI4</accession>
<sequence>MGRKIHPLGFRLGVSQKHYSYWFAQKKDYPKFLEEDRKIRNLVEKYIQKHVKSVSNYGGVGHIEIQRKTDLIQINIYTGFPDLLIEEQSLGISQMKQDLRNLLGLESQNLRVTLTGVIQPYGEPKILAEHVASQLKNRVPFRRTMKKTIEMAGRTNGGGIKIQIAGRLNGSEMARVEWAREGRVPLQTVEANISYCYHPAQTIYGVLGIKIWVFRDT</sequence>
<keyword id="KW-0150">Chloroplast</keyword>
<keyword id="KW-0934">Plastid</keyword>
<keyword id="KW-0687">Ribonucleoprotein</keyword>
<keyword id="KW-0689">Ribosomal protein</keyword>
<keyword id="KW-0691">RNA editing</keyword>
<keyword id="KW-0694">RNA-binding</keyword>
<keyword id="KW-0699">rRNA-binding</keyword>
<proteinExistence type="evidence at transcript level"/>
<organism>
    <name type="scientific">Adiantum capillus-veneris</name>
    <name type="common">Maidenhair fern</name>
    <dbReference type="NCBI Taxonomy" id="13818"/>
    <lineage>
        <taxon>Eukaryota</taxon>
        <taxon>Viridiplantae</taxon>
        <taxon>Streptophyta</taxon>
        <taxon>Embryophyta</taxon>
        <taxon>Tracheophyta</taxon>
        <taxon>Polypodiopsida</taxon>
        <taxon>Polypodiidae</taxon>
        <taxon>Polypodiales</taxon>
        <taxon>Pteridineae</taxon>
        <taxon>Pteridaceae</taxon>
        <taxon>Vittarioideae</taxon>
        <taxon>Adiantum</taxon>
    </lineage>
</organism>
<evidence type="ECO:0000250" key="1"/>
<evidence type="ECO:0000269" key="2">
    <source>
    </source>
</evidence>
<evidence type="ECO:0000305" key="3"/>
<feature type="chain" id="PRO_0000130266" description="Small ribosomal subunit protein uS3c">
    <location>
        <begin position="1"/>
        <end position="217"/>
    </location>
</feature>
<feature type="domain" description="KH type-2">
    <location>
        <begin position="47"/>
        <end position="118"/>
    </location>
</feature>
<geneLocation type="chloroplast"/>
<protein>
    <recommendedName>
        <fullName evidence="3">Small ribosomal subunit protein uS3c</fullName>
    </recommendedName>
    <alternativeName>
        <fullName>30S ribosomal protein S3, chloroplastic</fullName>
    </alternativeName>
</protein>
<reference key="1">
    <citation type="journal article" date="2003" name="DNA Res.">
        <title>Complete nucleotide sequence of the chloroplast genome from a leptosporangiate fern, Adiantum capillus-veneris L.</title>
        <authorList>
            <person name="Wolf P.G."/>
            <person name="Rowe C.A."/>
            <person name="Sinclair R.B."/>
            <person name="Hasebe M."/>
        </authorList>
    </citation>
    <scope>NUCLEOTIDE SEQUENCE [LARGE SCALE GENOMIC DNA]</scope>
</reference>
<reference key="2">
    <citation type="journal article" date="2004" name="Gene">
        <title>High levels of RNA editing in a vascular plant chloroplast genome: analysis of transcripts from the fern Adiantum capillus-veneris.</title>
        <authorList>
            <person name="Wolf P.G."/>
            <person name="Rowe C.A."/>
            <person name="Hasebe M."/>
        </authorList>
    </citation>
    <scope>NUCLEOTIDE SEQUENCE [GENOMIC DNA]</scope>
    <scope>RNA EDITING</scope>
</reference>
<name>RR3_ADICA</name>